<comment type="function">
    <text evidence="1">Catalyzes the NAD-dependent reduction of succinylglutamate semialdehyde into succinylglutamate.</text>
</comment>
<comment type="catalytic activity">
    <reaction evidence="1">
        <text>N-succinyl-L-glutamate 5-semialdehyde + NAD(+) + H2O = N-succinyl-L-glutamate + NADH + 2 H(+)</text>
        <dbReference type="Rhea" id="RHEA:10812"/>
        <dbReference type="ChEBI" id="CHEBI:15377"/>
        <dbReference type="ChEBI" id="CHEBI:15378"/>
        <dbReference type="ChEBI" id="CHEBI:57540"/>
        <dbReference type="ChEBI" id="CHEBI:57945"/>
        <dbReference type="ChEBI" id="CHEBI:58520"/>
        <dbReference type="ChEBI" id="CHEBI:58763"/>
        <dbReference type="EC" id="1.2.1.71"/>
    </reaction>
</comment>
<comment type="pathway">
    <text evidence="1">Amino-acid degradation; L-arginine degradation via AST pathway; L-glutamate and succinate from L-arginine: step 4/5.</text>
</comment>
<comment type="similarity">
    <text evidence="1">Belongs to the aldehyde dehydrogenase family. AstD subfamily.</text>
</comment>
<accession>B0TU38</accession>
<organism>
    <name type="scientific">Shewanella halifaxensis (strain HAW-EB4)</name>
    <dbReference type="NCBI Taxonomy" id="458817"/>
    <lineage>
        <taxon>Bacteria</taxon>
        <taxon>Pseudomonadati</taxon>
        <taxon>Pseudomonadota</taxon>
        <taxon>Gammaproteobacteria</taxon>
        <taxon>Alteromonadales</taxon>
        <taxon>Shewanellaceae</taxon>
        <taxon>Shewanella</taxon>
    </lineage>
</organism>
<proteinExistence type="inferred from homology"/>
<name>ASTD_SHEHH</name>
<sequence>MTQFIEGKWVAGLGHEVTSINPANQEVIWNSKTATPEQVSQAVDAARNAQFDWFMLGFEGRLAIVEAYRDQLEANKAEMAEVIAQETGKPQWETATEAGAMIGKIGLSVAAYHKRTGTSESETPAGRAVLRHKPHGVVAVFGPYNFPGHLPNGHIVPALLAGNTVVFKPSELTPKVAELMLKLWEKAGLPAGVINLVQGEVETGKALAAHPQIDGLFFTGSSRTGHILHQQYAGDPGKILALEMGGNNPLIIKDVADTKAAVHDIIQSAYISAGQRCTCARRLYVEKGATGDALLEQLVAAIKQIKVGPWNAQPQPFMGSMISETAAKGMVEAQRNLLNLGANSLVELTHIEAGTGLVSPGLIDVTGVIELPDEEYFGPLLQVVRYSDFDEAIKLANTTRYGLSAGILADSREDYDYFLARIRAGIVNWNKQITGASGAAPFGGVGASGNHRASAFYAADYCAYPVASVEADAVSLPATLSPGLSL</sequence>
<reference key="1">
    <citation type="submission" date="2008-01" db="EMBL/GenBank/DDBJ databases">
        <title>Complete sequence of Shewanella halifaxensis HAW-EB4.</title>
        <authorList>
            <consortium name="US DOE Joint Genome Institute"/>
            <person name="Copeland A."/>
            <person name="Lucas S."/>
            <person name="Lapidus A."/>
            <person name="Glavina del Rio T."/>
            <person name="Dalin E."/>
            <person name="Tice H."/>
            <person name="Bruce D."/>
            <person name="Goodwin L."/>
            <person name="Pitluck S."/>
            <person name="Sims D."/>
            <person name="Brettin T."/>
            <person name="Detter J.C."/>
            <person name="Han C."/>
            <person name="Kuske C.R."/>
            <person name="Schmutz J."/>
            <person name="Larimer F."/>
            <person name="Land M."/>
            <person name="Hauser L."/>
            <person name="Kyrpides N."/>
            <person name="Kim E."/>
            <person name="Zhao J.-S."/>
            <person name="Richardson P."/>
        </authorList>
    </citation>
    <scope>NUCLEOTIDE SEQUENCE [LARGE SCALE GENOMIC DNA]</scope>
    <source>
        <strain>HAW-EB4</strain>
    </source>
</reference>
<protein>
    <recommendedName>
        <fullName evidence="1">N-succinylglutamate 5-semialdehyde dehydrogenase</fullName>
        <ecNumber evidence="1">1.2.1.71</ecNumber>
    </recommendedName>
    <alternativeName>
        <fullName evidence="1">Succinylglutamic semialdehyde dehydrogenase</fullName>
        <shortName evidence="1">SGSD</shortName>
    </alternativeName>
</protein>
<keyword id="KW-0056">Arginine metabolism</keyword>
<keyword id="KW-0520">NAD</keyword>
<keyword id="KW-0560">Oxidoreductase</keyword>
<feature type="chain" id="PRO_1000085407" description="N-succinylglutamate 5-semialdehyde dehydrogenase">
    <location>
        <begin position="1"/>
        <end position="486"/>
    </location>
</feature>
<feature type="active site" evidence="1">
    <location>
        <position position="243"/>
    </location>
</feature>
<feature type="active site" evidence="1">
    <location>
        <position position="277"/>
    </location>
</feature>
<feature type="binding site" evidence="1">
    <location>
        <begin position="220"/>
        <end position="225"/>
    </location>
    <ligand>
        <name>NAD(+)</name>
        <dbReference type="ChEBI" id="CHEBI:57540"/>
    </ligand>
</feature>
<dbReference type="EC" id="1.2.1.71" evidence="1"/>
<dbReference type="EMBL" id="CP000931">
    <property type="protein sequence ID" value="ABZ78149.1"/>
    <property type="molecule type" value="Genomic_DNA"/>
</dbReference>
<dbReference type="RefSeq" id="WP_012278669.1">
    <property type="nucleotide sequence ID" value="NC_010334.1"/>
</dbReference>
<dbReference type="SMR" id="B0TU38"/>
<dbReference type="STRING" id="458817.Shal_3608"/>
<dbReference type="KEGG" id="shl:Shal_3608"/>
<dbReference type="eggNOG" id="COG1012">
    <property type="taxonomic scope" value="Bacteria"/>
</dbReference>
<dbReference type="HOGENOM" id="CLU_005391_1_0_6"/>
<dbReference type="OrthoDB" id="9812625at2"/>
<dbReference type="UniPathway" id="UPA00185">
    <property type="reaction ID" value="UER00282"/>
</dbReference>
<dbReference type="Proteomes" id="UP000001317">
    <property type="component" value="Chromosome"/>
</dbReference>
<dbReference type="GO" id="GO:0043824">
    <property type="term" value="F:succinylglutamate-semialdehyde dehydrogenase activity"/>
    <property type="evidence" value="ECO:0007669"/>
    <property type="project" value="UniProtKB-EC"/>
</dbReference>
<dbReference type="GO" id="GO:0019544">
    <property type="term" value="P:arginine catabolic process to glutamate"/>
    <property type="evidence" value="ECO:0007669"/>
    <property type="project" value="UniProtKB-UniRule"/>
</dbReference>
<dbReference type="GO" id="GO:0019545">
    <property type="term" value="P:arginine catabolic process to succinate"/>
    <property type="evidence" value="ECO:0007669"/>
    <property type="project" value="UniProtKB-UniRule"/>
</dbReference>
<dbReference type="CDD" id="cd07095">
    <property type="entry name" value="ALDH_SGSD_AstD"/>
    <property type="match status" value="1"/>
</dbReference>
<dbReference type="FunFam" id="3.40.309.10:FF:000013">
    <property type="entry name" value="N-succinylglutamate 5-semialdehyde dehydrogenase"/>
    <property type="match status" value="1"/>
</dbReference>
<dbReference type="FunFam" id="3.40.605.10:FF:000010">
    <property type="entry name" value="N-succinylglutamate 5-semialdehyde dehydrogenase"/>
    <property type="match status" value="1"/>
</dbReference>
<dbReference type="Gene3D" id="3.40.605.10">
    <property type="entry name" value="Aldehyde Dehydrogenase, Chain A, domain 1"/>
    <property type="match status" value="1"/>
</dbReference>
<dbReference type="Gene3D" id="3.40.309.10">
    <property type="entry name" value="Aldehyde Dehydrogenase, Chain A, domain 2"/>
    <property type="match status" value="1"/>
</dbReference>
<dbReference type="HAMAP" id="MF_01174">
    <property type="entry name" value="Aldedh_AstD"/>
    <property type="match status" value="1"/>
</dbReference>
<dbReference type="InterPro" id="IPR016161">
    <property type="entry name" value="Ald_DH/histidinol_DH"/>
</dbReference>
<dbReference type="InterPro" id="IPR016163">
    <property type="entry name" value="Ald_DH_C"/>
</dbReference>
<dbReference type="InterPro" id="IPR016160">
    <property type="entry name" value="Ald_DH_CS_CYS"/>
</dbReference>
<dbReference type="InterPro" id="IPR029510">
    <property type="entry name" value="Ald_DH_CS_GLU"/>
</dbReference>
<dbReference type="InterPro" id="IPR016162">
    <property type="entry name" value="Ald_DH_N"/>
</dbReference>
<dbReference type="InterPro" id="IPR015590">
    <property type="entry name" value="Aldehyde_DH_dom"/>
</dbReference>
<dbReference type="InterPro" id="IPR017649">
    <property type="entry name" value="SuccinylGlu_semiald_DH_AstD"/>
</dbReference>
<dbReference type="NCBIfam" id="TIGR03240">
    <property type="entry name" value="arg_catab_astD"/>
    <property type="match status" value="1"/>
</dbReference>
<dbReference type="NCBIfam" id="NF006992">
    <property type="entry name" value="PRK09457.1"/>
    <property type="match status" value="1"/>
</dbReference>
<dbReference type="PANTHER" id="PTHR11699">
    <property type="entry name" value="ALDEHYDE DEHYDROGENASE-RELATED"/>
    <property type="match status" value="1"/>
</dbReference>
<dbReference type="Pfam" id="PF00171">
    <property type="entry name" value="Aldedh"/>
    <property type="match status" value="1"/>
</dbReference>
<dbReference type="SUPFAM" id="SSF53720">
    <property type="entry name" value="ALDH-like"/>
    <property type="match status" value="1"/>
</dbReference>
<dbReference type="PROSITE" id="PS00070">
    <property type="entry name" value="ALDEHYDE_DEHYDR_CYS"/>
    <property type="match status" value="1"/>
</dbReference>
<dbReference type="PROSITE" id="PS00687">
    <property type="entry name" value="ALDEHYDE_DEHYDR_GLU"/>
    <property type="match status" value="1"/>
</dbReference>
<evidence type="ECO:0000255" key="1">
    <source>
        <dbReference type="HAMAP-Rule" id="MF_01174"/>
    </source>
</evidence>
<gene>
    <name evidence="1" type="primary">astD</name>
    <name type="ordered locus">Shal_3608</name>
</gene>